<proteinExistence type="evidence at protein level"/>
<name>ATPL_THEVB</name>
<feature type="chain" id="PRO_0000365934" description="ATP synthase subunit c">
    <location>
        <begin position="1"/>
        <end position="82"/>
    </location>
</feature>
<feature type="transmembrane region" description="Helical" evidence="2">
    <location>
        <begin position="3"/>
        <end position="23"/>
    </location>
</feature>
<feature type="transmembrane region" description="Helical" evidence="2">
    <location>
        <begin position="57"/>
        <end position="77"/>
    </location>
</feature>
<feature type="site" description="Reversibly protonated during proton transport" evidence="1">
    <location>
        <position position="61"/>
    </location>
</feature>
<keyword id="KW-0066">ATP synthesis</keyword>
<keyword id="KW-0138">CF(0)</keyword>
<keyword id="KW-0375">Hydrogen ion transport</keyword>
<keyword id="KW-0406">Ion transport</keyword>
<keyword id="KW-0446">Lipid-binding</keyword>
<keyword id="KW-0472">Membrane</keyword>
<keyword id="KW-1185">Reference proteome</keyword>
<keyword id="KW-0793">Thylakoid</keyword>
<keyword id="KW-0812">Transmembrane</keyword>
<keyword id="KW-1133">Transmembrane helix</keyword>
<keyword id="KW-0813">Transport</keyword>
<organism>
    <name type="scientific">Thermosynechococcus vestitus (strain NIES-2133 / IAM M-273 / BP-1)</name>
    <dbReference type="NCBI Taxonomy" id="197221"/>
    <lineage>
        <taxon>Bacteria</taxon>
        <taxon>Bacillati</taxon>
        <taxon>Cyanobacteriota</taxon>
        <taxon>Cyanophyceae</taxon>
        <taxon>Acaryochloridales</taxon>
        <taxon>Thermosynechococcaceae</taxon>
        <taxon>Thermosynechococcus</taxon>
    </lineage>
</organism>
<sequence length="82" mass="8207">MNPLIASASVLAAALAIGLASLGPGLAQGNASGQALEGIARQPEAEGKIRGTLLLSLAFMESLTIYGLVIALVLLFANPFAS</sequence>
<reference key="1">
    <citation type="journal article" date="2002" name="DNA Res.">
        <title>Complete genome structure of the thermophilic cyanobacterium Thermosynechococcus elongatus BP-1.</title>
        <authorList>
            <person name="Nakamura Y."/>
            <person name="Kaneko T."/>
            <person name="Sato S."/>
            <person name="Ikeuchi M."/>
            <person name="Katoh H."/>
            <person name="Sasamoto S."/>
            <person name="Watanabe A."/>
            <person name="Iriguchi M."/>
            <person name="Kawashima K."/>
            <person name="Kimura T."/>
            <person name="Kishida Y."/>
            <person name="Kiyokawa C."/>
            <person name="Kohara M."/>
            <person name="Matsumoto M."/>
            <person name="Matsuno A."/>
            <person name="Nakazaki N."/>
            <person name="Shimpo S."/>
            <person name="Sugimoto M."/>
            <person name="Takeuchi C."/>
            <person name="Yamada M."/>
            <person name="Tabata S."/>
        </authorList>
    </citation>
    <scope>NUCLEOTIDE SEQUENCE [LARGE SCALE GENOMIC DNA]</scope>
    <source>
        <strain>NIES-2133 / IAM M-273 / BP-1</strain>
    </source>
</reference>
<reference key="2">
    <citation type="journal article" date="2008" name="Biochim. Biophys. Acta">
        <title>Remarkable stability of the proton translocating F1FO-ATP synthase from the thermophilic cyanobacterium Thermosynechococcus elongatus BP-1.</title>
        <authorList>
            <person name="Suhai T."/>
            <person name="Dencher N.A."/>
            <person name="Poetsch A."/>
            <person name="Seelert H."/>
        </authorList>
    </citation>
    <scope>FUNCTION</scope>
    <scope>MASS SPECTROMETRY</scope>
    <scope>SUBUNIT</scope>
    <scope>SUBCELLULAR LOCATION</scope>
    <source>
        <strain>NIES-2133 / IAM M-273 / BP-1</strain>
    </source>
</reference>
<accession>Q8DLP7</accession>
<comment type="function">
    <text evidence="1">F(1)F(0) ATP synthase produces ATP from ADP in the presence of a proton or sodium gradient. F-type ATPases consist of two structural domains, F(1) containing the extramembraneous catalytic core and F(0) containing the membrane proton channel, linked together by a central stalk and a peripheral stalk. During catalysis, ATP synthesis in the catalytic domain of F(1) is coupled via a rotary mechanism of the central stalk subunits to proton translocation (By similarity).</text>
</comment>
<comment type="function">
    <text evidence="1">Key component of the F(0) channel; it plays a direct role in translocation across the membrane. A homomeric c-ring of between 10-14 subunits forms the central stalk rotor element with the F(1) delta and epsilon subunits (By similarity).</text>
</comment>
<comment type="function">
    <text evidence="3">The complex from the organism is particularly stable to disruption and remains functional after 6 hrs at 55 degrees Celsius.</text>
</comment>
<comment type="activity regulation">
    <text>Inhibited by dicyclohexylcarbodiimide.</text>
</comment>
<comment type="subunit">
    <text evidence="3">F-type ATPases have 2 components, F(1) - the catalytic core - and F(0) - the membrane proton channel. F(1) has five subunits: alpha(3), beta(3), gamma(1), delta(1), epsilon(1). F(0) has four main subunits: a(1), b(1), b'(1) and c(10-14). The alpha and beta chains form an alternating ring which encloses part of the gamma chain. F(1) is attached to F(0) by a central stalk formed by the gamma and epsilon chains, while a peripheral stalk is formed by the delta, b and b' chains.</text>
</comment>
<comment type="subcellular location">
    <subcellularLocation>
        <location evidence="3">Cellular thylakoid membrane</location>
        <topology evidence="1">Multi-pass membrane protein</topology>
    </subcellularLocation>
</comment>
<comment type="mass spectrometry" mass="8238.17" method="MALDI" evidence="3"/>
<comment type="similarity">
    <text evidence="4">Belongs to the ATPase C chain family.</text>
</comment>
<comment type="sequence caution" evidence="4">
    <conflict type="erroneous initiation">
        <sequence resource="EMBL-CDS" id="BAC07983"/>
    </conflict>
    <text>Extended N-terminus.</text>
</comment>
<protein>
    <recommendedName>
        <fullName>ATP synthase subunit c</fullName>
    </recommendedName>
    <alternativeName>
        <fullName>ATP synthase F(0) sector subunit c</fullName>
    </alternativeName>
    <alternativeName>
        <fullName>F-type ATPase subunit c</fullName>
        <shortName>F-ATPase subunit c</shortName>
    </alternativeName>
    <alternativeName>
        <fullName>Lipid-binding protein</fullName>
    </alternativeName>
</protein>
<evidence type="ECO:0000250" key="1"/>
<evidence type="ECO:0000255" key="2"/>
<evidence type="ECO:0000269" key="3">
    <source>
    </source>
</evidence>
<evidence type="ECO:0000305" key="4"/>
<gene>
    <name type="primary">atpE</name>
    <name type="synonym">atpH</name>
    <name type="ordered locus">tlr0431</name>
</gene>
<dbReference type="EMBL" id="BA000039">
    <property type="protein sequence ID" value="BAC07983.1"/>
    <property type="status" value="ALT_INIT"/>
    <property type="molecule type" value="Genomic_DNA"/>
</dbReference>
<dbReference type="RefSeq" id="NP_681221.1">
    <property type="nucleotide sequence ID" value="NC_004113.1"/>
</dbReference>
<dbReference type="RefSeq" id="WP_024125083.1">
    <property type="nucleotide sequence ID" value="NC_004113.1"/>
</dbReference>
<dbReference type="SMR" id="Q8DLP7"/>
<dbReference type="STRING" id="197221.gene:10747020"/>
<dbReference type="EnsemblBacteria" id="BAC07983">
    <property type="protein sequence ID" value="BAC07983"/>
    <property type="gene ID" value="BAC07983"/>
</dbReference>
<dbReference type="KEGG" id="tel:tlr0431"/>
<dbReference type="PATRIC" id="fig|197221.4.peg.455"/>
<dbReference type="eggNOG" id="COG0636">
    <property type="taxonomic scope" value="Bacteria"/>
</dbReference>
<dbReference type="Proteomes" id="UP000000440">
    <property type="component" value="Chromosome"/>
</dbReference>
<dbReference type="GO" id="GO:0031676">
    <property type="term" value="C:plasma membrane-derived thylakoid membrane"/>
    <property type="evidence" value="ECO:0007669"/>
    <property type="project" value="UniProtKB-SubCell"/>
</dbReference>
<dbReference type="GO" id="GO:0045259">
    <property type="term" value="C:proton-transporting ATP synthase complex"/>
    <property type="evidence" value="ECO:0007669"/>
    <property type="project" value="UniProtKB-KW"/>
</dbReference>
<dbReference type="GO" id="GO:0033177">
    <property type="term" value="C:proton-transporting two-sector ATPase complex, proton-transporting domain"/>
    <property type="evidence" value="ECO:0007669"/>
    <property type="project" value="InterPro"/>
</dbReference>
<dbReference type="GO" id="GO:0008289">
    <property type="term" value="F:lipid binding"/>
    <property type="evidence" value="ECO:0007669"/>
    <property type="project" value="UniProtKB-KW"/>
</dbReference>
<dbReference type="GO" id="GO:0046933">
    <property type="term" value="F:proton-transporting ATP synthase activity, rotational mechanism"/>
    <property type="evidence" value="ECO:0007669"/>
    <property type="project" value="UniProtKB-UniRule"/>
</dbReference>
<dbReference type="FunFam" id="1.20.20.10:FF:000001">
    <property type="entry name" value="ATP synthase subunit c, chloroplastic"/>
    <property type="match status" value="1"/>
</dbReference>
<dbReference type="Gene3D" id="1.20.20.10">
    <property type="entry name" value="F1F0 ATP synthase subunit C"/>
    <property type="match status" value="1"/>
</dbReference>
<dbReference type="HAMAP" id="MF_01396">
    <property type="entry name" value="ATP_synth_c_bact"/>
    <property type="match status" value="1"/>
</dbReference>
<dbReference type="InterPro" id="IPR005953">
    <property type="entry name" value="ATP_synth_csu_bac/chlpt"/>
</dbReference>
<dbReference type="InterPro" id="IPR000454">
    <property type="entry name" value="ATP_synth_F0_csu"/>
</dbReference>
<dbReference type="InterPro" id="IPR020537">
    <property type="entry name" value="ATP_synth_F0_csu_DDCD_BS"/>
</dbReference>
<dbReference type="InterPro" id="IPR038662">
    <property type="entry name" value="ATP_synth_F0_csu_sf"/>
</dbReference>
<dbReference type="InterPro" id="IPR002379">
    <property type="entry name" value="ATPase_proteolipid_c-like_dom"/>
</dbReference>
<dbReference type="InterPro" id="IPR035921">
    <property type="entry name" value="F/V-ATP_Csub_sf"/>
</dbReference>
<dbReference type="NCBIfam" id="TIGR01260">
    <property type="entry name" value="ATP_synt_c"/>
    <property type="match status" value="1"/>
</dbReference>
<dbReference type="NCBIfam" id="NF005608">
    <property type="entry name" value="PRK07354.1"/>
    <property type="match status" value="1"/>
</dbReference>
<dbReference type="PANTHER" id="PTHR10031">
    <property type="entry name" value="ATP SYNTHASE LIPID-BINDING PROTEIN, MITOCHONDRIAL"/>
    <property type="match status" value="1"/>
</dbReference>
<dbReference type="PANTHER" id="PTHR10031:SF0">
    <property type="entry name" value="ATPASE PROTEIN 9"/>
    <property type="match status" value="1"/>
</dbReference>
<dbReference type="Pfam" id="PF00137">
    <property type="entry name" value="ATP-synt_C"/>
    <property type="match status" value="1"/>
</dbReference>
<dbReference type="PRINTS" id="PR00124">
    <property type="entry name" value="ATPASEC"/>
</dbReference>
<dbReference type="SUPFAM" id="SSF81333">
    <property type="entry name" value="F1F0 ATP synthase subunit C"/>
    <property type="match status" value="1"/>
</dbReference>
<dbReference type="PROSITE" id="PS00605">
    <property type="entry name" value="ATPASE_C"/>
    <property type="match status" value="1"/>
</dbReference>